<gene>
    <name type="primary">Anapc5</name>
    <name type="ORF">MNCb-2778</name>
</gene>
<feature type="chain" id="PRO_0000064598" description="Anaphase-promoting complex subunit 5">
    <location>
        <begin position="1"/>
        <end position="740"/>
    </location>
</feature>
<feature type="repeat" description="TPR 1">
    <location>
        <begin position="194"/>
        <end position="234"/>
    </location>
</feature>
<feature type="repeat" description="TPR 2">
    <location>
        <begin position="235"/>
        <end position="285"/>
    </location>
</feature>
<feature type="repeat" description="TPR 3">
    <location>
        <begin position="286"/>
        <end position="322"/>
    </location>
</feature>
<feature type="repeat" description="TPR 4">
    <location>
        <begin position="323"/>
        <end position="363"/>
    </location>
</feature>
<feature type="repeat" description="TPR 5">
    <location>
        <begin position="364"/>
        <end position="403"/>
    </location>
</feature>
<feature type="repeat" description="TPR 6">
    <location>
        <begin position="404"/>
        <end position="451"/>
    </location>
</feature>
<feature type="repeat" description="TPR 7">
    <location>
        <begin position="452"/>
        <end position="485"/>
    </location>
</feature>
<feature type="repeat" description="TPR 8">
    <location>
        <begin position="486"/>
        <end position="525"/>
    </location>
</feature>
<feature type="repeat" description="TPR 9">
    <location>
        <begin position="526"/>
        <end position="565"/>
    </location>
</feature>
<feature type="repeat" description="TPR 10">
    <location>
        <begin position="566"/>
        <end position="605"/>
    </location>
</feature>
<feature type="repeat" description="TPR 11">
    <location>
        <begin position="606"/>
        <end position="645"/>
    </location>
</feature>
<feature type="repeat" description="TPR 12">
    <location>
        <begin position="646"/>
        <end position="681"/>
    </location>
</feature>
<feature type="repeat" description="TPR 13">
    <location>
        <begin position="682"/>
        <end position="721"/>
    </location>
</feature>
<feature type="modified residue" description="Phosphoserine" evidence="1">
    <location>
        <position position="180"/>
    </location>
</feature>
<feature type="modified residue" description="Phosphothreonine" evidence="1">
    <location>
        <position position="217"/>
    </location>
</feature>
<feature type="splice variant" id="VSP_008472" description="In isoform 2." evidence="2">
    <location>
        <begin position="360"/>
        <end position="372"/>
    </location>
</feature>
<feature type="sequence conflict" description="In Ref. 1; BAA95076." evidence="3" ref="1">
    <original>E</original>
    <variation>V</variation>
    <location>
        <position position="72"/>
    </location>
</feature>
<feature type="sequence conflict" description="In Ref. 2; BAC33891." evidence="3" ref="2">
    <original>A</original>
    <variation>E</variation>
    <location>
        <position position="78"/>
    </location>
</feature>
<feature type="sequence conflict" description="In Ref. 1; BAA95076." evidence="3" ref="1">
    <original>R</original>
    <variation>H</variation>
    <location>
        <position position="248"/>
    </location>
</feature>
<feature type="sequence conflict" description="In Ref. 1; BAA95076." evidence="3" ref="1">
    <original>F</original>
    <variation>S</variation>
    <location>
        <position position="501"/>
    </location>
</feature>
<feature type="sequence conflict" description="In Ref. 1; BAA95076." evidence="3" ref="1">
    <original>H</original>
    <variation>Y</variation>
    <location>
        <position position="511"/>
    </location>
</feature>
<feature type="sequence conflict" description="In Ref. 1; BAA95076." evidence="3" ref="1">
    <original>I</original>
    <variation>V</variation>
    <location>
        <position position="520"/>
    </location>
</feature>
<feature type="sequence conflict" description="In Ref. 3; AAH46566." evidence="3" ref="3">
    <original>V</original>
    <variation>I</variation>
    <location>
        <position position="642"/>
    </location>
</feature>
<feature type="sequence conflict" description="In Ref. 2; BAC27401." evidence="3" ref="2">
    <original>S</original>
    <variation>T</variation>
    <location>
        <position position="662"/>
    </location>
</feature>
<feature type="sequence conflict" description="In Ref. 3; AAH46566." evidence="3" ref="3">
    <original>I</original>
    <variation>V</variation>
    <location>
        <position position="676"/>
    </location>
</feature>
<feature type="sequence conflict" description="In Ref. 2; BAC33891." evidence="3" ref="2">
    <original>A</original>
    <variation>T</variation>
    <location>
        <position position="682"/>
    </location>
</feature>
<sequence length="740" mass="83098">MMTNGVVHANLFGIKDWVTPYKIAVLVLLNEMGRTGEGAVSLVERRKLNQLLLPLLQGPDITLSKLYKLIEESCPQLANSVQIRIKLMAEGELKDMEQFFDDLSDSFSGTEPEVHKTSVVGLFLRHMILAYSKLSFSQVFKLYTALQQYFQNGEKKTVEDADMDREDGEKQMEKEELDVSVREEEVSCSGPLSQKQAEFFLSQQAALLKNDETKALTPASLQKELNNLLKFNPDFAEAHYLSYLNNLRVQDVFSSTHSLLHYFDRLILTGAEGKSNGEEGYGRSLRYAALNLAALHCRFGHYQQAELALQEAIRIAQESNDHVCLQHCLSWLYVLGQKRADSYVLLEHSVKKAVHFGLPYLASLGIQSLVQQRAFAGKTANKLMDALKDSDLLHWKHSLSELIDISIAQKTAIWRLYGRSTMALQQAQMLLSMNSLESLNAGVQQNNTESFAVALCHLAELHAEQGCFAAAGEVLKHLKDRFPPNSQHAQLWMLCDQKIQFDRAMNDGKFHLADSLVTGITALNGIEGVYRKAVVLQAQNQMTEAHKLLQKLLTYCQKLKNTEMVISVLLSVAELYWRSSSPTIAMPVLLEALALSKEYRLQYLASETVLNLAYAQLILGIPEQALTLLHMAIEPILADGAVLDKGRAMFLVSKCQVASAASYDPVKKAEALEAAIQNLSEAKNYFAQVDCRERIRDVAYFQARLYHALGKTQERNHCAMIFRQLHQELPAHGVPLINHL</sequence>
<reference key="1">
    <citation type="submission" date="2000-04" db="EMBL/GenBank/DDBJ databases">
        <title>Isolation of full-length cDNA clones from mouse brain cDNA library made by oligo-capping method.</title>
        <authorList>
            <person name="Osada N."/>
            <person name="Kusuda J."/>
            <person name="Tanuma R."/>
            <person name="Ito A."/>
            <person name="Hirata M."/>
            <person name="Sugano S."/>
            <person name="Hashimoto K."/>
        </authorList>
    </citation>
    <scope>NUCLEOTIDE SEQUENCE [LARGE SCALE MRNA] (ISOFORM 1)</scope>
    <source>
        <strain>C57BL/6J</strain>
        <tissue>Brain</tissue>
    </source>
</reference>
<reference key="2">
    <citation type="journal article" date="2005" name="Science">
        <title>The transcriptional landscape of the mammalian genome.</title>
        <authorList>
            <person name="Carninci P."/>
            <person name="Kasukawa T."/>
            <person name="Katayama S."/>
            <person name="Gough J."/>
            <person name="Frith M.C."/>
            <person name="Maeda N."/>
            <person name="Oyama R."/>
            <person name="Ravasi T."/>
            <person name="Lenhard B."/>
            <person name="Wells C."/>
            <person name="Kodzius R."/>
            <person name="Shimokawa K."/>
            <person name="Bajic V.B."/>
            <person name="Brenner S.E."/>
            <person name="Batalov S."/>
            <person name="Forrest A.R."/>
            <person name="Zavolan M."/>
            <person name="Davis M.J."/>
            <person name="Wilming L.G."/>
            <person name="Aidinis V."/>
            <person name="Allen J.E."/>
            <person name="Ambesi-Impiombato A."/>
            <person name="Apweiler R."/>
            <person name="Aturaliya R.N."/>
            <person name="Bailey T.L."/>
            <person name="Bansal M."/>
            <person name="Baxter L."/>
            <person name="Beisel K.W."/>
            <person name="Bersano T."/>
            <person name="Bono H."/>
            <person name="Chalk A.M."/>
            <person name="Chiu K.P."/>
            <person name="Choudhary V."/>
            <person name="Christoffels A."/>
            <person name="Clutterbuck D.R."/>
            <person name="Crowe M.L."/>
            <person name="Dalla E."/>
            <person name="Dalrymple B.P."/>
            <person name="de Bono B."/>
            <person name="Della Gatta G."/>
            <person name="di Bernardo D."/>
            <person name="Down T."/>
            <person name="Engstrom P."/>
            <person name="Fagiolini M."/>
            <person name="Faulkner G."/>
            <person name="Fletcher C.F."/>
            <person name="Fukushima T."/>
            <person name="Furuno M."/>
            <person name="Futaki S."/>
            <person name="Gariboldi M."/>
            <person name="Georgii-Hemming P."/>
            <person name="Gingeras T.R."/>
            <person name="Gojobori T."/>
            <person name="Green R.E."/>
            <person name="Gustincich S."/>
            <person name="Harbers M."/>
            <person name="Hayashi Y."/>
            <person name="Hensch T.K."/>
            <person name="Hirokawa N."/>
            <person name="Hill D."/>
            <person name="Huminiecki L."/>
            <person name="Iacono M."/>
            <person name="Ikeo K."/>
            <person name="Iwama A."/>
            <person name="Ishikawa T."/>
            <person name="Jakt M."/>
            <person name="Kanapin A."/>
            <person name="Katoh M."/>
            <person name="Kawasawa Y."/>
            <person name="Kelso J."/>
            <person name="Kitamura H."/>
            <person name="Kitano H."/>
            <person name="Kollias G."/>
            <person name="Krishnan S.P."/>
            <person name="Kruger A."/>
            <person name="Kummerfeld S.K."/>
            <person name="Kurochkin I.V."/>
            <person name="Lareau L.F."/>
            <person name="Lazarevic D."/>
            <person name="Lipovich L."/>
            <person name="Liu J."/>
            <person name="Liuni S."/>
            <person name="McWilliam S."/>
            <person name="Madan Babu M."/>
            <person name="Madera M."/>
            <person name="Marchionni L."/>
            <person name="Matsuda H."/>
            <person name="Matsuzawa S."/>
            <person name="Miki H."/>
            <person name="Mignone F."/>
            <person name="Miyake S."/>
            <person name="Morris K."/>
            <person name="Mottagui-Tabar S."/>
            <person name="Mulder N."/>
            <person name="Nakano N."/>
            <person name="Nakauchi H."/>
            <person name="Ng P."/>
            <person name="Nilsson R."/>
            <person name="Nishiguchi S."/>
            <person name="Nishikawa S."/>
            <person name="Nori F."/>
            <person name="Ohara O."/>
            <person name="Okazaki Y."/>
            <person name="Orlando V."/>
            <person name="Pang K.C."/>
            <person name="Pavan W.J."/>
            <person name="Pavesi G."/>
            <person name="Pesole G."/>
            <person name="Petrovsky N."/>
            <person name="Piazza S."/>
            <person name="Reed J."/>
            <person name="Reid J.F."/>
            <person name="Ring B.Z."/>
            <person name="Ringwald M."/>
            <person name="Rost B."/>
            <person name="Ruan Y."/>
            <person name="Salzberg S.L."/>
            <person name="Sandelin A."/>
            <person name="Schneider C."/>
            <person name="Schoenbach C."/>
            <person name="Sekiguchi K."/>
            <person name="Semple C.A."/>
            <person name="Seno S."/>
            <person name="Sessa L."/>
            <person name="Sheng Y."/>
            <person name="Shibata Y."/>
            <person name="Shimada H."/>
            <person name="Shimada K."/>
            <person name="Silva D."/>
            <person name="Sinclair B."/>
            <person name="Sperling S."/>
            <person name="Stupka E."/>
            <person name="Sugiura K."/>
            <person name="Sultana R."/>
            <person name="Takenaka Y."/>
            <person name="Taki K."/>
            <person name="Tammoja K."/>
            <person name="Tan S.L."/>
            <person name="Tang S."/>
            <person name="Taylor M.S."/>
            <person name="Tegner J."/>
            <person name="Teichmann S.A."/>
            <person name="Ueda H.R."/>
            <person name="van Nimwegen E."/>
            <person name="Verardo R."/>
            <person name="Wei C.L."/>
            <person name="Yagi K."/>
            <person name="Yamanishi H."/>
            <person name="Zabarovsky E."/>
            <person name="Zhu S."/>
            <person name="Zimmer A."/>
            <person name="Hide W."/>
            <person name="Bult C."/>
            <person name="Grimmond S.M."/>
            <person name="Teasdale R.D."/>
            <person name="Liu E.T."/>
            <person name="Brusic V."/>
            <person name="Quackenbush J."/>
            <person name="Wahlestedt C."/>
            <person name="Mattick J.S."/>
            <person name="Hume D.A."/>
            <person name="Kai C."/>
            <person name="Sasaki D."/>
            <person name="Tomaru Y."/>
            <person name="Fukuda S."/>
            <person name="Kanamori-Katayama M."/>
            <person name="Suzuki M."/>
            <person name="Aoki J."/>
            <person name="Arakawa T."/>
            <person name="Iida J."/>
            <person name="Imamura K."/>
            <person name="Itoh M."/>
            <person name="Kato T."/>
            <person name="Kawaji H."/>
            <person name="Kawagashira N."/>
            <person name="Kawashima T."/>
            <person name="Kojima M."/>
            <person name="Kondo S."/>
            <person name="Konno H."/>
            <person name="Nakano K."/>
            <person name="Ninomiya N."/>
            <person name="Nishio T."/>
            <person name="Okada M."/>
            <person name="Plessy C."/>
            <person name="Shibata K."/>
            <person name="Shiraki T."/>
            <person name="Suzuki S."/>
            <person name="Tagami M."/>
            <person name="Waki K."/>
            <person name="Watahiki A."/>
            <person name="Okamura-Oho Y."/>
            <person name="Suzuki H."/>
            <person name="Kawai J."/>
            <person name="Hayashizaki Y."/>
        </authorList>
    </citation>
    <scope>NUCLEOTIDE SEQUENCE [LARGE SCALE MRNA] (ISOFORM 1)</scope>
    <source>
        <strain>C57BL/6J</strain>
        <strain>NOD</strain>
        <tissue>Embryo</tissue>
        <tissue>Heart</tissue>
        <tissue>Kidney</tissue>
        <tissue>Spinal cord</tissue>
        <tissue>Testis</tissue>
        <tissue>Thymus</tissue>
    </source>
</reference>
<reference key="3">
    <citation type="journal article" date="2004" name="Genome Res.">
        <title>The status, quality, and expansion of the NIH full-length cDNA project: the Mammalian Gene Collection (MGC).</title>
        <authorList>
            <consortium name="The MGC Project Team"/>
        </authorList>
    </citation>
    <scope>NUCLEOTIDE SEQUENCE [LARGE SCALE MRNA] (ISOFORM 2)</scope>
    <source>
        <strain>Czech II</strain>
        <tissue>Brain</tissue>
        <tissue>Mammary tumor</tissue>
    </source>
</reference>
<reference key="4">
    <citation type="journal article" date="2010" name="Cell">
        <title>A tissue-specific atlas of mouse protein phosphorylation and expression.</title>
        <authorList>
            <person name="Huttlin E.L."/>
            <person name="Jedrychowski M.P."/>
            <person name="Elias J.E."/>
            <person name="Goswami T."/>
            <person name="Rad R."/>
            <person name="Beausoleil S.A."/>
            <person name="Villen J."/>
            <person name="Haas W."/>
            <person name="Sowa M.E."/>
            <person name="Gygi S.P."/>
        </authorList>
    </citation>
    <scope>IDENTIFICATION BY MASS SPECTROMETRY [LARGE SCALE ANALYSIS]</scope>
    <source>
        <tissue>Brain</tissue>
        <tissue>Kidney</tissue>
        <tissue>Lung</tissue>
        <tissue>Spleen</tissue>
        <tissue>Testis</tissue>
    </source>
</reference>
<evidence type="ECO:0000250" key="1">
    <source>
        <dbReference type="UniProtKB" id="Q9UJX4"/>
    </source>
</evidence>
<evidence type="ECO:0000303" key="2">
    <source>
    </source>
</evidence>
<evidence type="ECO:0000305" key="3"/>
<organism>
    <name type="scientific">Mus musculus</name>
    <name type="common">Mouse</name>
    <dbReference type="NCBI Taxonomy" id="10090"/>
    <lineage>
        <taxon>Eukaryota</taxon>
        <taxon>Metazoa</taxon>
        <taxon>Chordata</taxon>
        <taxon>Craniata</taxon>
        <taxon>Vertebrata</taxon>
        <taxon>Euteleostomi</taxon>
        <taxon>Mammalia</taxon>
        <taxon>Eutheria</taxon>
        <taxon>Euarchontoglires</taxon>
        <taxon>Glires</taxon>
        <taxon>Rodentia</taxon>
        <taxon>Myomorpha</taxon>
        <taxon>Muroidea</taxon>
        <taxon>Muridae</taxon>
        <taxon>Murinae</taxon>
        <taxon>Mus</taxon>
        <taxon>Mus</taxon>
    </lineage>
</organism>
<proteinExistence type="evidence at protein level"/>
<name>APC5_MOUSE</name>
<dbReference type="EMBL" id="AB041593">
    <property type="protein sequence ID" value="BAA95076.1"/>
    <property type="status" value="ALT_FRAME"/>
    <property type="molecule type" value="mRNA"/>
</dbReference>
<dbReference type="EMBL" id="AK012579">
    <property type="protein sequence ID" value="BAB28331.1"/>
    <property type="molecule type" value="mRNA"/>
</dbReference>
<dbReference type="EMBL" id="AK013978">
    <property type="protein sequence ID" value="BAB29097.1"/>
    <property type="molecule type" value="mRNA"/>
</dbReference>
<dbReference type="EMBL" id="AK031432">
    <property type="protein sequence ID" value="BAC27401.1"/>
    <property type="molecule type" value="mRNA"/>
</dbReference>
<dbReference type="EMBL" id="AK049719">
    <property type="protein sequence ID" value="BAC33891.1"/>
    <property type="molecule type" value="mRNA"/>
</dbReference>
<dbReference type="EMBL" id="AK088327">
    <property type="protein sequence ID" value="BAC40284.1"/>
    <property type="molecule type" value="mRNA"/>
</dbReference>
<dbReference type="EMBL" id="AK159916">
    <property type="protein sequence ID" value="BAE35479.1"/>
    <property type="molecule type" value="mRNA"/>
</dbReference>
<dbReference type="EMBL" id="AK168814">
    <property type="protein sequence ID" value="BAE40641.1"/>
    <property type="molecule type" value="mRNA"/>
</dbReference>
<dbReference type="EMBL" id="AK169196">
    <property type="protein sequence ID" value="BAE40972.1"/>
    <property type="molecule type" value="mRNA"/>
</dbReference>
<dbReference type="EMBL" id="BC010339">
    <property type="protein sequence ID" value="AAH10339.1"/>
    <property type="molecule type" value="mRNA"/>
</dbReference>
<dbReference type="EMBL" id="BC046566">
    <property type="protein sequence ID" value="AAH46566.1"/>
    <property type="molecule type" value="mRNA"/>
</dbReference>
<dbReference type="EMBL" id="BC046804">
    <property type="protein sequence ID" value="AAH46804.1"/>
    <property type="molecule type" value="mRNA"/>
</dbReference>
<dbReference type="CCDS" id="CCDS39258.1">
    <molecule id="Q8BTZ4-1"/>
</dbReference>
<dbReference type="CCDS" id="CCDS80397.1">
    <molecule id="Q8BTZ4-2"/>
</dbReference>
<dbReference type="RefSeq" id="NP_001035956.1">
    <molecule id="Q8BTZ4-2"/>
    <property type="nucleotide sequence ID" value="NM_001042491.2"/>
</dbReference>
<dbReference type="RefSeq" id="NP_067480.2">
    <molecule id="Q8BTZ4-1"/>
    <property type="nucleotide sequence ID" value="NM_021505.3"/>
</dbReference>
<dbReference type="SMR" id="Q8BTZ4"/>
<dbReference type="BioGRID" id="208479">
    <property type="interactions" value="20"/>
</dbReference>
<dbReference type="CORUM" id="Q8BTZ4"/>
<dbReference type="FunCoup" id="Q8BTZ4">
    <property type="interactions" value="2972"/>
</dbReference>
<dbReference type="IntAct" id="Q8BTZ4">
    <property type="interactions" value="10"/>
</dbReference>
<dbReference type="STRING" id="10090.ENSMUSP00000083393"/>
<dbReference type="iPTMnet" id="Q8BTZ4"/>
<dbReference type="PhosphoSitePlus" id="Q8BTZ4"/>
<dbReference type="PaxDb" id="10090-ENSMUSP00000083393"/>
<dbReference type="ProteomicsDB" id="281898">
    <molecule id="Q8BTZ4-1"/>
</dbReference>
<dbReference type="ProteomicsDB" id="281899">
    <molecule id="Q8BTZ4-2"/>
</dbReference>
<dbReference type="Pumba" id="Q8BTZ4"/>
<dbReference type="Antibodypedia" id="31562">
    <property type="antibodies" value="364 antibodies from 37 providers"/>
</dbReference>
<dbReference type="DNASU" id="59008"/>
<dbReference type="Ensembl" id="ENSMUST00000086216.9">
    <molecule id="Q8BTZ4-1"/>
    <property type="protein sequence ID" value="ENSMUSP00000083393.5"/>
    <property type="gene ID" value="ENSMUSG00000029472.14"/>
</dbReference>
<dbReference type="Ensembl" id="ENSMUST00000200645.5">
    <molecule id="Q8BTZ4-2"/>
    <property type="protein sequence ID" value="ENSMUSP00000142922.2"/>
    <property type="gene ID" value="ENSMUSG00000029472.14"/>
</dbReference>
<dbReference type="GeneID" id="59008"/>
<dbReference type="KEGG" id="mmu:59008"/>
<dbReference type="UCSC" id="uc008zmg.2">
    <molecule id="Q8BTZ4-1"/>
    <property type="organism name" value="mouse"/>
</dbReference>
<dbReference type="AGR" id="MGI:1929722"/>
<dbReference type="CTD" id="51433"/>
<dbReference type="MGI" id="MGI:1929722">
    <property type="gene designation" value="Anapc5"/>
</dbReference>
<dbReference type="VEuPathDB" id="HostDB:ENSMUSG00000029472"/>
<dbReference type="eggNOG" id="KOG4322">
    <property type="taxonomic scope" value="Eukaryota"/>
</dbReference>
<dbReference type="GeneTree" id="ENSGT00390000018674"/>
<dbReference type="HOGENOM" id="CLU_020635_0_0_1"/>
<dbReference type="InParanoid" id="Q8BTZ4"/>
<dbReference type="OMA" id="DANMGMA"/>
<dbReference type="OrthoDB" id="2504561at2759"/>
<dbReference type="PhylomeDB" id="Q8BTZ4"/>
<dbReference type="TreeFam" id="TF105444"/>
<dbReference type="Reactome" id="R-MMU-141430">
    <property type="pathway name" value="Inactivation of APC/C via direct inhibition of the APC/C complex"/>
</dbReference>
<dbReference type="Reactome" id="R-MMU-174048">
    <property type="pathway name" value="APC/C:Cdc20 mediated degradation of Cyclin B"/>
</dbReference>
<dbReference type="Reactome" id="R-MMU-174084">
    <property type="pathway name" value="Autodegradation of Cdh1 by Cdh1:APC/C"/>
</dbReference>
<dbReference type="Reactome" id="R-MMU-174154">
    <property type="pathway name" value="APC/C:Cdc20 mediated degradation of Securin"/>
</dbReference>
<dbReference type="Reactome" id="R-MMU-174178">
    <property type="pathway name" value="APC/C:Cdh1 mediated degradation of Cdc20 and other APC/C:Cdh1 targeted proteins in late mitosis/early G1"/>
</dbReference>
<dbReference type="Reactome" id="R-MMU-174184">
    <property type="pathway name" value="Cdc20:Phospho-APC/C mediated degradation of Cyclin A"/>
</dbReference>
<dbReference type="Reactome" id="R-MMU-176407">
    <property type="pathway name" value="Conversion from APC/C:Cdc20 to APC/C:Cdh1 in late anaphase"/>
</dbReference>
<dbReference type="Reactome" id="R-MMU-176408">
    <property type="pathway name" value="Regulation of APC/C activators between G1/S and early anaphase"/>
</dbReference>
<dbReference type="Reactome" id="R-MMU-176409">
    <property type="pathway name" value="APC/C:Cdc20 mediated degradation of mitotic proteins"/>
</dbReference>
<dbReference type="Reactome" id="R-MMU-176412">
    <property type="pathway name" value="Phosphorylation of the APC/C"/>
</dbReference>
<dbReference type="Reactome" id="R-MMU-179409">
    <property type="pathway name" value="APC-Cdc20 mediated degradation of Nek2A"/>
</dbReference>
<dbReference type="Reactome" id="R-MMU-2467813">
    <property type="pathway name" value="Separation of Sister Chromatids"/>
</dbReference>
<dbReference type="Reactome" id="R-MMU-2559582">
    <property type="pathway name" value="Senescence-Associated Secretory Phenotype (SASP)"/>
</dbReference>
<dbReference type="Reactome" id="R-MMU-68867">
    <property type="pathway name" value="Assembly of the pre-replicative complex"/>
</dbReference>
<dbReference type="Reactome" id="R-MMU-69017">
    <property type="pathway name" value="CDK-mediated phosphorylation and removal of Cdc6"/>
</dbReference>
<dbReference type="Reactome" id="R-MMU-983168">
    <property type="pathway name" value="Antigen processing: Ubiquitination &amp; Proteasome degradation"/>
</dbReference>
<dbReference type="UniPathway" id="UPA00143"/>
<dbReference type="BioGRID-ORCS" id="59008">
    <property type="hits" value="25 hits in 79 CRISPR screens"/>
</dbReference>
<dbReference type="ChiTaRS" id="Anapc5">
    <property type="organism name" value="mouse"/>
</dbReference>
<dbReference type="PRO" id="PR:Q8BTZ4"/>
<dbReference type="Proteomes" id="UP000000589">
    <property type="component" value="Chromosome 5"/>
</dbReference>
<dbReference type="RNAct" id="Q8BTZ4">
    <property type="molecule type" value="protein"/>
</dbReference>
<dbReference type="Bgee" id="ENSMUSG00000029472">
    <property type="expression patterns" value="Expressed in bone fossa and 267 other cell types or tissues"/>
</dbReference>
<dbReference type="ExpressionAtlas" id="Q8BTZ4">
    <property type="expression patterns" value="baseline and differential"/>
</dbReference>
<dbReference type="GO" id="GO:0005680">
    <property type="term" value="C:anaphase-promoting complex"/>
    <property type="evidence" value="ECO:0000250"/>
    <property type="project" value="UniProtKB"/>
</dbReference>
<dbReference type="GO" id="GO:0005737">
    <property type="term" value="C:cytoplasm"/>
    <property type="evidence" value="ECO:0007669"/>
    <property type="project" value="UniProtKB-KW"/>
</dbReference>
<dbReference type="GO" id="GO:0005634">
    <property type="term" value="C:nucleus"/>
    <property type="evidence" value="ECO:0000250"/>
    <property type="project" value="UniProtKB"/>
</dbReference>
<dbReference type="GO" id="GO:0005819">
    <property type="term" value="C:spindle"/>
    <property type="evidence" value="ECO:0000250"/>
    <property type="project" value="UniProtKB"/>
</dbReference>
<dbReference type="GO" id="GO:0019903">
    <property type="term" value="F:protein phosphatase binding"/>
    <property type="evidence" value="ECO:0007669"/>
    <property type="project" value="Ensembl"/>
</dbReference>
<dbReference type="GO" id="GO:0031145">
    <property type="term" value="P:anaphase-promoting complex-dependent catabolic process"/>
    <property type="evidence" value="ECO:0000250"/>
    <property type="project" value="UniProtKB"/>
</dbReference>
<dbReference type="GO" id="GO:0051301">
    <property type="term" value="P:cell division"/>
    <property type="evidence" value="ECO:0007669"/>
    <property type="project" value="UniProtKB-KW"/>
</dbReference>
<dbReference type="GO" id="GO:0141198">
    <property type="term" value="P:protein branched polyubiquitination"/>
    <property type="evidence" value="ECO:0000250"/>
    <property type="project" value="UniProtKB"/>
</dbReference>
<dbReference type="GO" id="GO:0070979">
    <property type="term" value="P:protein K11-linked ubiquitination"/>
    <property type="evidence" value="ECO:0000250"/>
    <property type="project" value="UniProtKB"/>
</dbReference>
<dbReference type="GO" id="GO:0070936">
    <property type="term" value="P:protein K48-linked ubiquitination"/>
    <property type="evidence" value="ECO:0000250"/>
    <property type="project" value="UniProtKB"/>
</dbReference>
<dbReference type="CDD" id="cd16270">
    <property type="entry name" value="Apc5_N"/>
    <property type="match status" value="1"/>
</dbReference>
<dbReference type="FunFam" id="1.25.40.10:FF:000127">
    <property type="entry name" value="anaphase-promoting complex subunit 5 isoform X1"/>
    <property type="match status" value="1"/>
</dbReference>
<dbReference type="Gene3D" id="1.25.40.10">
    <property type="entry name" value="Tetratricopeptide repeat domain"/>
    <property type="match status" value="2"/>
</dbReference>
<dbReference type="InterPro" id="IPR037679">
    <property type="entry name" value="Apc5"/>
</dbReference>
<dbReference type="InterPro" id="IPR026000">
    <property type="entry name" value="Apc5_dom"/>
</dbReference>
<dbReference type="InterPro" id="IPR048968">
    <property type="entry name" value="Apc5_N"/>
</dbReference>
<dbReference type="InterPro" id="IPR011990">
    <property type="entry name" value="TPR-like_helical_dom_sf"/>
</dbReference>
<dbReference type="PANTHER" id="PTHR12830">
    <property type="entry name" value="ANAPHASE-PROMOTING COMPLEX SUBUNIT 5"/>
    <property type="match status" value="1"/>
</dbReference>
<dbReference type="PANTHER" id="PTHR12830:SF9">
    <property type="entry name" value="ANAPHASE-PROMOTING COMPLEX SUBUNIT 5"/>
    <property type="match status" value="1"/>
</dbReference>
<dbReference type="Pfam" id="PF12862">
    <property type="entry name" value="ANAPC5"/>
    <property type="match status" value="2"/>
</dbReference>
<dbReference type="Pfam" id="PF21371">
    <property type="entry name" value="Apc5_N"/>
    <property type="match status" value="1"/>
</dbReference>
<dbReference type="SUPFAM" id="SSF48452">
    <property type="entry name" value="TPR-like"/>
    <property type="match status" value="1"/>
</dbReference>
<keyword id="KW-0025">Alternative splicing</keyword>
<keyword id="KW-0131">Cell cycle</keyword>
<keyword id="KW-0132">Cell division</keyword>
<keyword id="KW-0963">Cytoplasm</keyword>
<keyword id="KW-0206">Cytoskeleton</keyword>
<keyword id="KW-0498">Mitosis</keyword>
<keyword id="KW-0539">Nucleus</keyword>
<keyword id="KW-0597">Phosphoprotein</keyword>
<keyword id="KW-1185">Reference proteome</keyword>
<keyword id="KW-0677">Repeat</keyword>
<keyword id="KW-0802">TPR repeat</keyword>
<keyword id="KW-0833">Ubl conjugation pathway</keyword>
<accession>Q8BTZ4</accession>
<accession>Q3TGA7</accession>
<accession>Q80UJ6</accession>
<accession>Q80W43</accession>
<accession>Q8BWW7</accession>
<accession>Q8C0F7</accession>
<accession>Q9CRX0</accession>
<accession>Q9CSL1</accession>
<accession>Q9JJB8</accession>
<protein>
    <recommendedName>
        <fullName>Anaphase-promoting complex subunit 5</fullName>
        <shortName>APC5</shortName>
    </recommendedName>
    <alternativeName>
        <fullName>Cyclosome subunit 5</fullName>
    </alternativeName>
</protein>
<comment type="function">
    <text evidence="1">Component of the anaphase promoting complex/cyclosome (APC/C), a cell cycle-regulated E3 ubiquitin ligase that controls progression through mitosis and the G1 phase of the cell cycle. The APC/C complex acts by mediating ubiquitination and subsequent degradation of target proteins: it mainly mediates the formation of 'Lys-11'-linked polyubiquitin chains and, to a lower extent, the formation of 'Lys-48'- and 'Lys-63'-linked polyubiquitin chains. The APC/C complex catalyzes assembly of branched 'Lys-11'-/'Lys-48'-linked branched ubiquitin chains on target proteins.</text>
</comment>
<comment type="pathway">
    <text evidence="1">Protein modification; protein ubiquitination.</text>
</comment>
<comment type="subunit">
    <text evidence="1">The mammalian APC/C is composed at least of 14 distinct subunits ANAPC1, ANAPC2, CDC27/APC3, ANAPC4, ANAPC5, CDC16/APC6, ANAPC7, CDC23/APC8, ANAPC10, ANAPC11, CDC26/APC12, ANAPC13, ANAPC15 and ANAPC16 that assemble into a complex of at least 19 chains with a combined molecular mass of around 1.2 MDa; APC/C interacts with FZR1 and FBXO5.</text>
</comment>
<comment type="subcellular location">
    <subcellularLocation>
        <location evidence="1">Nucleus</location>
    </subcellularLocation>
    <subcellularLocation>
        <location evidence="1">Cytoplasm</location>
        <location evidence="1">Cytoskeleton</location>
        <location evidence="1">Spindle</location>
    </subcellularLocation>
</comment>
<comment type="alternative products">
    <event type="alternative splicing"/>
    <isoform>
        <id>Q8BTZ4-1</id>
        <name>1</name>
        <sequence type="displayed"/>
    </isoform>
    <isoform>
        <id>Q8BTZ4-2</id>
        <name>2</name>
        <sequence type="described" ref="VSP_008472"/>
    </isoform>
</comment>
<comment type="similarity">
    <text evidence="3">Belongs to the APC5 family.</text>
</comment>
<comment type="sequence caution" evidence="3">
    <conflict type="frameshift">
        <sequence resource="EMBL-CDS" id="BAA95076"/>
    </conflict>
</comment>